<evidence type="ECO:0000255" key="1">
    <source>
        <dbReference type="HAMAP-Rule" id="MF_00233"/>
    </source>
</evidence>
<name>LOLB_YERPS</name>
<feature type="signal peptide" evidence="1">
    <location>
        <begin position="1"/>
        <end position="21"/>
    </location>
</feature>
<feature type="chain" id="PRO_1000021698" description="Outer-membrane lipoprotein LolB">
    <location>
        <begin position="22"/>
        <end position="207"/>
    </location>
</feature>
<feature type="lipid moiety-binding region" description="N-palmitoyl cysteine" evidence="1">
    <location>
        <position position="22"/>
    </location>
</feature>
<feature type="lipid moiety-binding region" description="S-diacylglycerol cysteine" evidence="1">
    <location>
        <position position="22"/>
    </location>
</feature>
<gene>
    <name evidence="1" type="primary">lolB</name>
    <name type="ordered locus">YPTB2003</name>
</gene>
<protein>
    <recommendedName>
        <fullName evidence="1">Outer-membrane lipoprotein LolB</fullName>
    </recommendedName>
</protein>
<comment type="function">
    <text evidence="1">Plays a critical role in the incorporation of lipoproteins in the outer membrane after they are released by the LolA protein.</text>
</comment>
<comment type="subunit">
    <text evidence="1">Monomer.</text>
</comment>
<comment type="subcellular location">
    <subcellularLocation>
        <location evidence="1">Cell outer membrane</location>
        <topology evidence="1">Lipid-anchor</topology>
    </subcellularLocation>
</comment>
<comment type="similarity">
    <text evidence="1">Belongs to the LolB family.</text>
</comment>
<organism>
    <name type="scientific">Yersinia pseudotuberculosis serotype I (strain IP32953)</name>
    <dbReference type="NCBI Taxonomy" id="273123"/>
    <lineage>
        <taxon>Bacteria</taxon>
        <taxon>Pseudomonadati</taxon>
        <taxon>Pseudomonadota</taxon>
        <taxon>Gammaproteobacteria</taxon>
        <taxon>Enterobacterales</taxon>
        <taxon>Yersiniaceae</taxon>
        <taxon>Yersinia</taxon>
    </lineage>
</organism>
<accession>Q66AX7</accession>
<sequence length="207" mass="24001">MPMRKRHFYRLLPLASLLLAACTIPVSKGPATSPTSPQWRQHEQQLQQLGQFETRGAFAYLSDKQKVYARFFWQQTSPERYRLLLTNPLGSTELELVVQPGVTQLTDNQGKRYVSDDPQEMIQKLTGMSIPLESLRQWILGLPGDTPNFTLDDKYRLKKLTYQQNGVTWVVDYQEYNTQVTPPLPSRLELNQDGQRIKLKMDSWTIK</sequence>
<dbReference type="EMBL" id="BX936398">
    <property type="protein sequence ID" value="CAH21241.1"/>
    <property type="molecule type" value="Genomic_DNA"/>
</dbReference>
<dbReference type="RefSeq" id="WP_011192397.1">
    <property type="nucleotide sequence ID" value="NC_006155.1"/>
</dbReference>
<dbReference type="SMR" id="Q66AX7"/>
<dbReference type="KEGG" id="ypo:BZ17_464"/>
<dbReference type="KEGG" id="yps:YPTB2003"/>
<dbReference type="PATRIC" id="fig|273123.14.peg.493"/>
<dbReference type="Proteomes" id="UP000001011">
    <property type="component" value="Chromosome"/>
</dbReference>
<dbReference type="GO" id="GO:0009279">
    <property type="term" value="C:cell outer membrane"/>
    <property type="evidence" value="ECO:0007669"/>
    <property type="project" value="UniProtKB-SubCell"/>
</dbReference>
<dbReference type="GO" id="GO:0044874">
    <property type="term" value="P:lipoprotein localization to outer membrane"/>
    <property type="evidence" value="ECO:0007669"/>
    <property type="project" value="UniProtKB-UniRule"/>
</dbReference>
<dbReference type="GO" id="GO:0015031">
    <property type="term" value="P:protein transport"/>
    <property type="evidence" value="ECO:0007669"/>
    <property type="project" value="UniProtKB-KW"/>
</dbReference>
<dbReference type="CDD" id="cd16326">
    <property type="entry name" value="LolB"/>
    <property type="match status" value="1"/>
</dbReference>
<dbReference type="Gene3D" id="2.50.20.10">
    <property type="entry name" value="Lipoprotein localisation LolA/LolB/LppX"/>
    <property type="match status" value="1"/>
</dbReference>
<dbReference type="HAMAP" id="MF_00233">
    <property type="entry name" value="LolB"/>
    <property type="match status" value="1"/>
</dbReference>
<dbReference type="InterPro" id="IPR029046">
    <property type="entry name" value="LolA/LolB/LppX"/>
</dbReference>
<dbReference type="InterPro" id="IPR004565">
    <property type="entry name" value="OM_lipoprot_LolB"/>
</dbReference>
<dbReference type="NCBIfam" id="TIGR00548">
    <property type="entry name" value="lolB"/>
    <property type="match status" value="1"/>
</dbReference>
<dbReference type="Pfam" id="PF03550">
    <property type="entry name" value="LolB"/>
    <property type="match status" value="1"/>
</dbReference>
<dbReference type="SUPFAM" id="SSF89392">
    <property type="entry name" value="Prokaryotic lipoproteins and lipoprotein localization factors"/>
    <property type="match status" value="1"/>
</dbReference>
<dbReference type="PROSITE" id="PS51257">
    <property type="entry name" value="PROKAR_LIPOPROTEIN"/>
    <property type="match status" value="1"/>
</dbReference>
<keyword id="KW-0998">Cell outer membrane</keyword>
<keyword id="KW-0143">Chaperone</keyword>
<keyword id="KW-0449">Lipoprotein</keyword>
<keyword id="KW-0472">Membrane</keyword>
<keyword id="KW-0564">Palmitate</keyword>
<keyword id="KW-0653">Protein transport</keyword>
<keyword id="KW-0732">Signal</keyword>
<keyword id="KW-0813">Transport</keyword>
<proteinExistence type="inferred from homology"/>
<reference key="1">
    <citation type="journal article" date="2004" name="Proc. Natl. Acad. Sci. U.S.A.">
        <title>Insights into the evolution of Yersinia pestis through whole-genome comparison with Yersinia pseudotuberculosis.</title>
        <authorList>
            <person name="Chain P.S.G."/>
            <person name="Carniel E."/>
            <person name="Larimer F.W."/>
            <person name="Lamerdin J."/>
            <person name="Stoutland P.O."/>
            <person name="Regala W.M."/>
            <person name="Georgescu A.M."/>
            <person name="Vergez L.M."/>
            <person name="Land M.L."/>
            <person name="Motin V.L."/>
            <person name="Brubaker R.R."/>
            <person name="Fowler J."/>
            <person name="Hinnebusch J."/>
            <person name="Marceau M."/>
            <person name="Medigue C."/>
            <person name="Simonet M."/>
            <person name="Chenal-Francisque V."/>
            <person name="Souza B."/>
            <person name="Dacheux D."/>
            <person name="Elliott J.M."/>
            <person name="Derbise A."/>
            <person name="Hauser L.J."/>
            <person name="Garcia E."/>
        </authorList>
    </citation>
    <scope>NUCLEOTIDE SEQUENCE [LARGE SCALE GENOMIC DNA]</scope>
    <source>
        <strain>IP32953</strain>
    </source>
</reference>